<evidence type="ECO:0000256" key="1">
    <source>
        <dbReference type="SAM" id="MobiDB-lite"/>
    </source>
</evidence>
<evidence type="ECO:0000305" key="2"/>
<dbReference type="EMBL" id="AE014074">
    <property type="protein sequence ID" value="AAM80330.1"/>
    <property type="molecule type" value="Genomic_DNA"/>
</dbReference>
<dbReference type="RefSeq" id="WP_002982507.1">
    <property type="nucleotide sequence ID" value="NC_004070.1"/>
</dbReference>
<dbReference type="SMR" id="P0DH08"/>
<dbReference type="KEGG" id="spg:SpyM3_1723"/>
<dbReference type="HOGENOM" id="CLU_135567_0_0_9"/>
<dbReference type="Proteomes" id="UP000000564">
    <property type="component" value="Chromosome"/>
</dbReference>
<dbReference type="Gene3D" id="1.10.1470.10">
    <property type="entry name" value="YjbJ"/>
    <property type="match status" value="1"/>
</dbReference>
<dbReference type="InterPro" id="IPR008462">
    <property type="entry name" value="CsbD"/>
</dbReference>
<dbReference type="InterPro" id="IPR036629">
    <property type="entry name" value="YjbJ_sf"/>
</dbReference>
<dbReference type="Pfam" id="PF05532">
    <property type="entry name" value="CsbD"/>
    <property type="match status" value="1"/>
</dbReference>
<dbReference type="SUPFAM" id="SSF69047">
    <property type="entry name" value="Hypothetical protein YjbJ"/>
    <property type="match status" value="1"/>
</dbReference>
<gene>
    <name type="ordered locus">SpyM3_1723</name>
</gene>
<reference key="1">
    <citation type="journal article" date="2002" name="Proc. Natl. Acad. Sci. U.S.A.">
        <title>Genome sequence of a serotype M3 strain of group A Streptococcus: phage-encoded toxins, the high-virulence phenotype, and clone emergence.</title>
        <authorList>
            <person name="Beres S.B."/>
            <person name="Sylva G.L."/>
            <person name="Barbian K.D."/>
            <person name="Lei B."/>
            <person name="Hoff J.S."/>
            <person name="Mammarella N.D."/>
            <person name="Liu M.-Y."/>
            <person name="Smoot J.C."/>
            <person name="Porcella S.F."/>
            <person name="Parkins L.D."/>
            <person name="Campbell D.S."/>
            <person name="Smith T.M."/>
            <person name="McCormick J.K."/>
            <person name="Leung D.Y.M."/>
            <person name="Schlievert P.M."/>
            <person name="Musser J.M."/>
        </authorList>
    </citation>
    <scope>NUCLEOTIDE SEQUENCE [LARGE SCALE GENOMIC DNA]</scope>
    <source>
        <strain>ATCC BAA-595 / MGAS315</strain>
    </source>
</reference>
<comment type="similarity">
    <text evidence="2">Belongs to the UPF0337 (CsbD) family.</text>
</comment>
<feature type="chain" id="PRO_0000210053" description="UPF0337 protein SpyM3_1723">
    <location>
        <begin position="1"/>
        <end position="66"/>
    </location>
</feature>
<feature type="region of interest" description="Disordered" evidence="1">
    <location>
        <begin position="1"/>
        <end position="23"/>
    </location>
</feature>
<feature type="compositionally biased region" description="Basic and acidic residues" evidence="1">
    <location>
        <begin position="1"/>
        <end position="10"/>
    </location>
</feature>
<accession>P0DH08</accession>
<accession>Q79W63</accession>
<accession>Q7CEN9</accession>
<sequence>MSEEKLKSKIEQASGGLKEGAGKLTGDKELEAKGFVEKTIAKGKELADDAKEAVEGAVDAVKEKLK</sequence>
<proteinExistence type="inferred from homology"/>
<name>Y1723_STRP3</name>
<protein>
    <recommendedName>
        <fullName>UPF0337 protein SpyM3_1723</fullName>
    </recommendedName>
</protein>
<organism>
    <name type="scientific">Streptococcus pyogenes serotype M3 (strain ATCC BAA-595 / MGAS315)</name>
    <dbReference type="NCBI Taxonomy" id="198466"/>
    <lineage>
        <taxon>Bacteria</taxon>
        <taxon>Bacillati</taxon>
        <taxon>Bacillota</taxon>
        <taxon>Bacilli</taxon>
        <taxon>Lactobacillales</taxon>
        <taxon>Streptococcaceae</taxon>
        <taxon>Streptococcus</taxon>
    </lineage>
</organism>